<comment type="subunit">
    <text evidence="1">Component of the small ribosomal subunit. Mature ribosomes consist of a small (40S) and a large (60S) subunit. The 40S subunit contains about 33 different proteins and 1 molecule of RNA (18S). The 60S subunit contains about 49 different proteins and 3 molecules of RNA (28S, 5.8S and 5S).</text>
</comment>
<comment type="subcellular location">
    <subcellularLocation>
        <location evidence="1">Cytoplasm</location>
    </subcellularLocation>
</comment>
<comment type="similarity">
    <text evidence="1">Belongs to the eukaryotic ribosomal protein eS1 family.</text>
</comment>
<comment type="sequence caution" evidence="3">
    <conflict type="erroneous gene model prediction">
        <sequence resource="EMBL-CDS" id="EDS31536"/>
    </conflict>
</comment>
<keyword id="KW-0963">Cytoplasm</keyword>
<keyword id="KW-1185">Reference proteome</keyword>
<keyword id="KW-0687">Ribonucleoprotein</keyword>
<keyword id="KW-0689">Ribosomal protein</keyword>
<organism>
    <name type="scientific">Culex quinquefasciatus</name>
    <name type="common">Southern house mosquito</name>
    <name type="synonym">Culex pungens</name>
    <dbReference type="NCBI Taxonomy" id="7176"/>
    <lineage>
        <taxon>Eukaryota</taxon>
        <taxon>Metazoa</taxon>
        <taxon>Ecdysozoa</taxon>
        <taxon>Arthropoda</taxon>
        <taxon>Hexapoda</taxon>
        <taxon>Insecta</taxon>
        <taxon>Pterygota</taxon>
        <taxon>Neoptera</taxon>
        <taxon>Endopterygota</taxon>
        <taxon>Diptera</taxon>
        <taxon>Nematocera</taxon>
        <taxon>Culicoidea</taxon>
        <taxon>Culicidae</taxon>
        <taxon>Culicinae</taxon>
        <taxon>Culicini</taxon>
        <taxon>Culex</taxon>
        <taxon>Culex</taxon>
    </lineage>
</organism>
<proteinExistence type="inferred from homology"/>
<evidence type="ECO:0000255" key="1">
    <source>
        <dbReference type="HAMAP-Rule" id="MF_03122"/>
    </source>
</evidence>
<evidence type="ECO:0000256" key="2">
    <source>
        <dbReference type="SAM" id="MobiDB-lite"/>
    </source>
</evidence>
<evidence type="ECO:0000305" key="3"/>
<reference key="1">
    <citation type="submission" date="2007-03" db="EMBL/GenBank/DDBJ databases">
        <title>Annotation of Culex pipiens quinquefasciatus.</title>
        <authorList>
            <consortium name="The Broad Institute Genome Sequencing Platform"/>
            <person name="Atkinson P.W."/>
            <person name="Hemingway J."/>
            <person name="Christensen B.M."/>
            <person name="Higgs S."/>
            <person name="Kodira C.D."/>
            <person name="Hannick L.I."/>
            <person name="Megy K."/>
            <person name="O'Leary S.B."/>
            <person name="Pearson M."/>
            <person name="Haas B.J."/>
            <person name="Mauceli E."/>
            <person name="Wortman J.R."/>
            <person name="Lee N.H."/>
            <person name="Guigo R."/>
            <person name="Stanke M."/>
            <person name="Alvarado L."/>
            <person name="Amedeo P."/>
            <person name="Antoine C.H."/>
            <person name="Arensburger P."/>
            <person name="Bidwell S.L."/>
            <person name="Crawford M."/>
            <person name="Camaro F."/>
            <person name="Devon K."/>
            <person name="Engels R."/>
            <person name="Hammond M."/>
            <person name="Howarth C."/>
            <person name="Koehrsen M."/>
            <person name="Lawson D."/>
            <person name="Montgomery P."/>
            <person name="Nene V."/>
            <person name="Nusbaum C."/>
            <person name="Puiu D."/>
            <person name="Romero-Severson J."/>
            <person name="Severson D.W."/>
            <person name="Shumway M."/>
            <person name="Sisk P."/>
            <person name="Stolte C."/>
            <person name="Zeng Q."/>
            <person name="Eisenstadt E."/>
            <person name="Fraser-Liggett C.M."/>
            <person name="Strausberg R."/>
            <person name="Galagan J."/>
            <person name="Birren B."/>
            <person name="Collins F.H."/>
        </authorList>
    </citation>
    <scope>NUCLEOTIDE SEQUENCE [LARGE SCALE GENOMIC DNA]</scope>
    <source>
        <strain>JHB</strain>
    </source>
</reference>
<protein>
    <recommendedName>
        <fullName evidence="1">Small ribosomal subunit protein eS1</fullName>
    </recommendedName>
    <alternativeName>
        <fullName evidence="3">40S ribosomal protein S3a</fullName>
    </alternativeName>
</protein>
<name>RS3A_CULQU</name>
<gene>
    <name type="ORF">CPIJ008584</name>
</gene>
<accession>B0WN96</accession>
<feature type="initiator methionine" description="Removed" evidence="1">
    <location>
        <position position="1"/>
    </location>
</feature>
<feature type="chain" id="PRO_0000389305" description="Small ribosomal subunit protein eS1">
    <location>
        <begin position="2"/>
        <end position="270"/>
    </location>
</feature>
<feature type="region of interest" description="Disordered" evidence="2">
    <location>
        <begin position="1"/>
        <end position="20"/>
    </location>
</feature>
<feature type="region of interest" description="Disordered" evidence="2">
    <location>
        <begin position="238"/>
        <end position="270"/>
    </location>
</feature>
<dbReference type="EMBL" id="DS232008">
    <property type="protein sequence ID" value="EDS31536.1"/>
    <property type="status" value="ALT_SEQ"/>
    <property type="molecule type" value="Genomic_DNA"/>
</dbReference>
<dbReference type="RefSeq" id="XP_001850180.1">
    <property type="nucleotide sequence ID" value="XM_001850128.1"/>
</dbReference>
<dbReference type="SMR" id="B0WN96"/>
<dbReference type="FunCoup" id="B0WN96">
    <property type="interactions" value="894"/>
</dbReference>
<dbReference type="STRING" id="7176.B0WN96"/>
<dbReference type="EnsemblMetazoa" id="CPIJ008584-RA">
    <property type="protein sequence ID" value="CPIJ008584-PA"/>
    <property type="gene ID" value="CPIJ008584"/>
</dbReference>
<dbReference type="EnsemblMetazoa" id="CQUJHB008579.R13236">
    <property type="protein sequence ID" value="CQUJHB008579.P13236"/>
    <property type="gene ID" value="CQUJHB008579"/>
</dbReference>
<dbReference type="EnsemblMetazoa" id="XM_038263071.1">
    <property type="protein sequence ID" value="XP_038118999.1"/>
    <property type="gene ID" value="LOC6040845"/>
</dbReference>
<dbReference type="KEGG" id="cqu:CpipJ_CPIJ008584"/>
<dbReference type="VEuPathDB" id="VectorBase:CPIJ008584"/>
<dbReference type="VEuPathDB" id="VectorBase:CQUJHB008579"/>
<dbReference type="eggNOG" id="KOG1628">
    <property type="taxonomic scope" value="Eukaryota"/>
</dbReference>
<dbReference type="HOGENOM" id="CLU_062507_0_1_1"/>
<dbReference type="InParanoid" id="B0WN96"/>
<dbReference type="OrthoDB" id="9834376at2759"/>
<dbReference type="Proteomes" id="UP000002320">
    <property type="component" value="Unassembled WGS sequence"/>
</dbReference>
<dbReference type="GO" id="GO:0022627">
    <property type="term" value="C:cytosolic small ribosomal subunit"/>
    <property type="evidence" value="ECO:0007669"/>
    <property type="project" value="UniProtKB-UniRule"/>
</dbReference>
<dbReference type="GO" id="GO:0003735">
    <property type="term" value="F:structural constituent of ribosome"/>
    <property type="evidence" value="ECO:0007669"/>
    <property type="project" value="UniProtKB-UniRule"/>
</dbReference>
<dbReference type="GO" id="GO:0006412">
    <property type="term" value="P:translation"/>
    <property type="evidence" value="ECO:0007669"/>
    <property type="project" value="UniProtKB-UniRule"/>
</dbReference>
<dbReference type="HAMAP" id="MF_03122">
    <property type="entry name" value="Ribosomal_eS1_euk"/>
    <property type="match status" value="1"/>
</dbReference>
<dbReference type="InterPro" id="IPR001593">
    <property type="entry name" value="Ribosomal_eS1"/>
</dbReference>
<dbReference type="InterPro" id="IPR018281">
    <property type="entry name" value="Ribosomal_eS1_CS"/>
</dbReference>
<dbReference type="InterPro" id="IPR027500">
    <property type="entry name" value="Ribosomal_eS1_euk"/>
</dbReference>
<dbReference type="PANTHER" id="PTHR11830">
    <property type="entry name" value="40S RIBOSOMAL PROTEIN S3A"/>
    <property type="match status" value="1"/>
</dbReference>
<dbReference type="Pfam" id="PF01015">
    <property type="entry name" value="Ribosomal_S3Ae"/>
    <property type="match status" value="1"/>
</dbReference>
<dbReference type="SMART" id="SM01397">
    <property type="entry name" value="Ribosomal_S3Ae"/>
    <property type="match status" value="1"/>
</dbReference>
<dbReference type="PROSITE" id="PS01191">
    <property type="entry name" value="RIBOSOMAL_S3AE"/>
    <property type="match status" value="1"/>
</dbReference>
<sequence>MAVGKNKGTSKGGKKGSKKKVVDPFTRKDWYDVKAPNMFSCRQVGKTLVNRTQGTRIASDGLKGRVFEVSLADLQNDTDAERSFRKFKLIAEDVHGRNVLCNFHGMDLTTDKLRSMVKKWQTLIECSVDVKTTDNYLLRVFCIGFTIKDQVSQRKTCYAQHSQIKAIRKNMTQIITNNVTSSDLKEVVNKLLPDSIAKDIEKACQGVYPLHDVYIRKVKVLKKPRFDLANLLELHGDGGGKGAEVSTGAAEGGVVVDRPEGYEPPVQESV</sequence>